<proteinExistence type="evidence at transcript level"/>
<protein>
    <recommendedName>
        <fullName>Lipase member M</fullName>
        <ecNumber>3.1.1.-</ecNumber>
    </recommendedName>
    <alternativeName>
        <fullName>Lipase-like abhydrolase domain-containing protein 3</fullName>
    </alternativeName>
</protein>
<reference key="1">
    <citation type="journal article" date="2007" name="Genome Biol.">
        <title>Large-scale identification of human genes implicated in epidermal barrier function.</title>
        <authorList>
            <person name="Toulza E."/>
            <person name="Mattiuzzo N.R."/>
            <person name="Galliano M.F."/>
            <person name="Jonca N."/>
            <person name="Dossat C."/>
            <person name="Jacob D."/>
            <person name="de Daruvar A."/>
            <person name="Wincker P."/>
            <person name="Serre G."/>
            <person name="Guerrin M."/>
        </authorList>
    </citation>
    <scope>NUCLEOTIDE SEQUENCE [MRNA] (ISOFORM 1)</scope>
    <scope>FUNCTION</scope>
    <scope>TISSUE SPECIFICITY</scope>
    <source>
        <tissue>Keratinocyte</tissue>
    </source>
</reference>
<reference key="2">
    <citation type="journal article" date="2004" name="Nature">
        <title>The DNA sequence and comparative analysis of human chromosome 10.</title>
        <authorList>
            <person name="Deloukas P."/>
            <person name="Earthrowl M.E."/>
            <person name="Grafham D.V."/>
            <person name="Rubenfield M."/>
            <person name="French L."/>
            <person name="Steward C.A."/>
            <person name="Sims S.K."/>
            <person name="Jones M.C."/>
            <person name="Searle S."/>
            <person name="Scott C."/>
            <person name="Howe K."/>
            <person name="Hunt S.E."/>
            <person name="Andrews T.D."/>
            <person name="Gilbert J.G.R."/>
            <person name="Swarbreck D."/>
            <person name="Ashurst J.L."/>
            <person name="Taylor A."/>
            <person name="Battles J."/>
            <person name="Bird C.P."/>
            <person name="Ainscough R."/>
            <person name="Almeida J.P."/>
            <person name="Ashwell R.I.S."/>
            <person name="Ambrose K.D."/>
            <person name="Babbage A.K."/>
            <person name="Bagguley C.L."/>
            <person name="Bailey J."/>
            <person name="Banerjee R."/>
            <person name="Bates K."/>
            <person name="Beasley H."/>
            <person name="Bray-Allen S."/>
            <person name="Brown A.J."/>
            <person name="Brown J.Y."/>
            <person name="Burford D.C."/>
            <person name="Burrill W."/>
            <person name="Burton J."/>
            <person name="Cahill P."/>
            <person name="Camire D."/>
            <person name="Carter N.P."/>
            <person name="Chapman J.C."/>
            <person name="Clark S.Y."/>
            <person name="Clarke G."/>
            <person name="Clee C.M."/>
            <person name="Clegg S."/>
            <person name="Corby N."/>
            <person name="Coulson A."/>
            <person name="Dhami P."/>
            <person name="Dutta I."/>
            <person name="Dunn M."/>
            <person name="Faulkner L."/>
            <person name="Frankish A."/>
            <person name="Frankland J.A."/>
            <person name="Garner P."/>
            <person name="Garnett J."/>
            <person name="Gribble S."/>
            <person name="Griffiths C."/>
            <person name="Grocock R."/>
            <person name="Gustafson E."/>
            <person name="Hammond S."/>
            <person name="Harley J.L."/>
            <person name="Hart E."/>
            <person name="Heath P.D."/>
            <person name="Ho T.P."/>
            <person name="Hopkins B."/>
            <person name="Horne J."/>
            <person name="Howden P.J."/>
            <person name="Huckle E."/>
            <person name="Hynds C."/>
            <person name="Johnson C."/>
            <person name="Johnson D."/>
            <person name="Kana A."/>
            <person name="Kay M."/>
            <person name="Kimberley A.M."/>
            <person name="Kershaw J.K."/>
            <person name="Kokkinaki M."/>
            <person name="Laird G.K."/>
            <person name="Lawlor S."/>
            <person name="Lee H.M."/>
            <person name="Leongamornlert D.A."/>
            <person name="Laird G."/>
            <person name="Lloyd C."/>
            <person name="Lloyd D.M."/>
            <person name="Loveland J."/>
            <person name="Lovell J."/>
            <person name="McLaren S."/>
            <person name="McLay K.E."/>
            <person name="McMurray A."/>
            <person name="Mashreghi-Mohammadi M."/>
            <person name="Matthews L."/>
            <person name="Milne S."/>
            <person name="Nickerson T."/>
            <person name="Nguyen M."/>
            <person name="Overton-Larty E."/>
            <person name="Palmer S.A."/>
            <person name="Pearce A.V."/>
            <person name="Peck A.I."/>
            <person name="Pelan S."/>
            <person name="Phillimore B."/>
            <person name="Porter K."/>
            <person name="Rice C.M."/>
            <person name="Rogosin A."/>
            <person name="Ross M.T."/>
            <person name="Sarafidou T."/>
            <person name="Sehra H.K."/>
            <person name="Shownkeen R."/>
            <person name="Skuce C.D."/>
            <person name="Smith M."/>
            <person name="Standring L."/>
            <person name="Sycamore N."/>
            <person name="Tester J."/>
            <person name="Thorpe A."/>
            <person name="Torcasso W."/>
            <person name="Tracey A."/>
            <person name="Tromans A."/>
            <person name="Tsolas J."/>
            <person name="Wall M."/>
            <person name="Walsh J."/>
            <person name="Wang H."/>
            <person name="Weinstock K."/>
            <person name="West A.P."/>
            <person name="Willey D.L."/>
            <person name="Whitehead S.L."/>
            <person name="Wilming L."/>
            <person name="Wray P.W."/>
            <person name="Young L."/>
            <person name="Chen Y."/>
            <person name="Lovering R.C."/>
            <person name="Moschonas N.K."/>
            <person name="Siebert R."/>
            <person name="Fechtel K."/>
            <person name="Bentley D."/>
            <person name="Durbin R.M."/>
            <person name="Hubbard T."/>
            <person name="Doucette-Stamm L."/>
            <person name="Beck S."/>
            <person name="Smith D.R."/>
            <person name="Rogers J."/>
        </authorList>
    </citation>
    <scope>NUCLEOTIDE SEQUENCE [LARGE SCALE GENOMIC DNA]</scope>
</reference>
<reference key="3">
    <citation type="journal article" date="2004" name="Genome Res.">
        <title>The status, quality, and expansion of the NIH full-length cDNA project: the Mammalian Gene Collection (MGC).</title>
        <authorList>
            <consortium name="The MGC Project Team"/>
        </authorList>
    </citation>
    <scope>NUCLEOTIDE SEQUENCE [LARGE SCALE MRNA] (ISOFORM 2)</scope>
</reference>
<comment type="function">
    <text evidence="4">Plays a highly specific role in the last step of keratinocyte differentiation. May have an essential function in lipid metabolism of the most differentiated epidermal layers.</text>
</comment>
<comment type="subcellular location">
    <subcellularLocation>
        <location evidence="6">Secreted</location>
    </subcellularLocation>
</comment>
<comment type="alternative products">
    <event type="alternative splicing"/>
    <isoform>
        <id>Q5VYY2-1</id>
        <name>1</name>
        <sequence type="displayed"/>
    </isoform>
    <isoform>
        <id>Q5VYY2-2</id>
        <name>2</name>
        <sequence type="described" ref="VSP_056261"/>
    </isoform>
</comment>
<comment type="tissue specificity">
    <text evidence="4">Exclusively expressed in the epidermis within the granular keratinocytes.</text>
</comment>
<comment type="similarity">
    <text evidence="6">Belongs to the AB hydrolase superfamily. Lipase family.</text>
</comment>
<gene>
    <name type="primary">LIPM</name>
    <name type="synonym">LIPL3</name>
</gene>
<dbReference type="EC" id="3.1.1.-"/>
<dbReference type="EMBL" id="EF426484">
    <property type="protein sequence ID" value="ABR08389.1"/>
    <property type="molecule type" value="mRNA"/>
</dbReference>
<dbReference type="EMBL" id="AL353113">
    <property type="status" value="NOT_ANNOTATED_CDS"/>
    <property type="molecule type" value="Genomic_DNA"/>
</dbReference>
<dbReference type="EMBL" id="AL358532">
    <property type="status" value="NOT_ANNOTATED_CDS"/>
    <property type="molecule type" value="Genomic_DNA"/>
</dbReference>
<dbReference type="EMBL" id="BC157888">
    <property type="protein sequence ID" value="AAI57889.1"/>
    <property type="molecule type" value="mRNA"/>
</dbReference>
<dbReference type="EMBL" id="BC171908">
    <property type="protein sequence ID" value="AAI71908.1"/>
    <property type="molecule type" value="mRNA"/>
</dbReference>
<dbReference type="CCDS" id="CCDS44457.1">
    <molecule id="Q5VYY2-1"/>
</dbReference>
<dbReference type="RefSeq" id="NP_001121687.1">
    <molecule id="Q5VYY2-1"/>
    <property type="nucleotide sequence ID" value="NM_001128215.1"/>
</dbReference>
<dbReference type="SMR" id="Q5VYY2"/>
<dbReference type="BioGRID" id="131089">
    <property type="interactions" value="1"/>
</dbReference>
<dbReference type="FunCoup" id="Q5VYY2">
    <property type="interactions" value="5"/>
</dbReference>
<dbReference type="STRING" id="9606.ENSP00000383901"/>
<dbReference type="ESTHER" id="human-LIPM">
    <property type="family name" value="Acidic_Lipase"/>
</dbReference>
<dbReference type="GlyCosmos" id="Q5VYY2">
    <property type="glycosylation" value="1 site, No reported glycans"/>
</dbReference>
<dbReference type="GlyGen" id="Q5VYY2">
    <property type="glycosylation" value="1 site"/>
</dbReference>
<dbReference type="iPTMnet" id="Q5VYY2"/>
<dbReference type="PhosphoSitePlus" id="Q5VYY2"/>
<dbReference type="BioMuta" id="LIPM"/>
<dbReference type="DMDM" id="147647745"/>
<dbReference type="MassIVE" id="Q5VYY2"/>
<dbReference type="PaxDb" id="9606-ENSP00000383901"/>
<dbReference type="PeptideAtlas" id="Q5VYY2"/>
<dbReference type="ProteomicsDB" id="3465"/>
<dbReference type="ProteomicsDB" id="65658">
    <molecule id="Q5VYY2-1"/>
</dbReference>
<dbReference type="Antibodypedia" id="56561">
    <property type="antibodies" value="67 antibodies from 12 providers"/>
</dbReference>
<dbReference type="DNASU" id="340654"/>
<dbReference type="Ensembl" id="ENST00000404743.9">
    <molecule id="Q5VYY2-1"/>
    <property type="protein sequence ID" value="ENSP00000383901.3"/>
    <property type="gene ID" value="ENSG00000173239.14"/>
</dbReference>
<dbReference type="Ensembl" id="ENST00000539337.2">
    <molecule id="Q5VYY2-2"/>
    <property type="protein sequence ID" value="ENSP00000440375.1"/>
    <property type="gene ID" value="ENSG00000173239.14"/>
</dbReference>
<dbReference type="GeneID" id="340654"/>
<dbReference type="KEGG" id="hsa:340654"/>
<dbReference type="MANE-Select" id="ENST00000404743.9">
    <property type="protein sequence ID" value="ENSP00000383901.3"/>
    <property type="RefSeq nucleotide sequence ID" value="NM_001128215.1"/>
    <property type="RefSeq protein sequence ID" value="NP_001121687.1"/>
</dbReference>
<dbReference type="UCSC" id="uc009xtm.2">
    <molecule id="Q5VYY2-1"/>
    <property type="organism name" value="human"/>
</dbReference>
<dbReference type="AGR" id="HGNC:23455"/>
<dbReference type="CTD" id="340654"/>
<dbReference type="DisGeNET" id="340654"/>
<dbReference type="GeneCards" id="LIPM"/>
<dbReference type="HGNC" id="HGNC:23455">
    <property type="gene designation" value="LIPM"/>
</dbReference>
<dbReference type="HPA" id="ENSG00000173239">
    <property type="expression patterns" value="Tissue enriched (skin)"/>
</dbReference>
<dbReference type="MIM" id="613923">
    <property type="type" value="gene"/>
</dbReference>
<dbReference type="neXtProt" id="NX_Q5VYY2"/>
<dbReference type="OpenTargets" id="ENSG00000173239"/>
<dbReference type="PharmGKB" id="PA162394101"/>
<dbReference type="VEuPathDB" id="HostDB:ENSG00000173239"/>
<dbReference type="eggNOG" id="KOG2624">
    <property type="taxonomic scope" value="Eukaryota"/>
</dbReference>
<dbReference type="GeneTree" id="ENSGT00940000156860"/>
<dbReference type="HOGENOM" id="CLU_010974_0_0_1"/>
<dbReference type="InParanoid" id="Q5VYY2"/>
<dbReference type="OMA" id="GHMPTKA"/>
<dbReference type="OrthoDB" id="9974421at2759"/>
<dbReference type="PAN-GO" id="Q5VYY2">
    <property type="GO annotations" value="0 GO annotations based on evolutionary models"/>
</dbReference>
<dbReference type="PhylomeDB" id="Q5VYY2"/>
<dbReference type="TreeFam" id="TF315485"/>
<dbReference type="PathwayCommons" id="Q5VYY2"/>
<dbReference type="Reactome" id="R-HSA-6809371">
    <property type="pathway name" value="Formation of the cornified envelope"/>
</dbReference>
<dbReference type="BioGRID-ORCS" id="340654">
    <property type="hits" value="20 hits in 1144 CRISPR screens"/>
</dbReference>
<dbReference type="GenomeRNAi" id="340654"/>
<dbReference type="Pharos" id="Q5VYY2">
    <property type="development level" value="Tbio"/>
</dbReference>
<dbReference type="PRO" id="PR:Q5VYY2"/>
<dbReference type="Proteomes" id="UP000005640">
    <property type="component" value="Chromosome 10"/>
</dbReference>
<dbReference type="RNAct" id="Q5VYY2">
    <property type="molecule type" value="protein"/>
</dbReference>
<dbReference type="Bgee" id="ENSG00000173239">
    <property type="expression patterns" value="Expressed in skin of leg and 29 other cell types or tissues"/>
</dbReference>
<dbReference type="GO" id="GO:0005576">
    <property type="term" value="C:extracellular region"/>
    <property type="evidence" value="ECO:0000304"/>
    <property type="project" value="Reactome"/>
</dbReference>
<dbReference type="GO" id="GO:0004465">
    <property type="term" value="F:lipoprotein lipase activity"/>
    <property type="evidence" value="ECO:0000304"/>
    <property type="project" value="Reactome"/>
</dbReference>
<dbReference type="GO" id="GO:0070268">
    <property type="term" value="P:cornification"/>
    <property type="evidence" value="ECO:0000304"/>
    <property type="project" value="Reactome"/>
</dbReference>
<dbReference type="GO" id="GO:0016042">
    <property type="term" value="P:lipid catabolic process"/>
    <property type="evidence" value="ECO:0007669"/>
    <property type="project" value="UniProtKB-KW"/>
</dbReference>
<dbReference type="FunFam" id="3.40.50.1820:FF:000012">
    <property type="entry name" value="Lipase"/>
    <property type="match status" value="1"/>
</dbReference>
<dbReference type="Gene3D" id="3.40.50.1820">
    <property type="entry name" value="alpha/beta hydrolase"/>
    <property type="match status" value="1"/>
</dbReference>
<dbReference type="InterPro" id="IPR000073">
    <property type="entry name" value="AB_hydrolase_1"/>
</dbReference>
<dbReference type="InterPro" id="IPR029058">
    <property type="entry name" value="AB_hydrolase_fold"/>
</dbReference>
<dbReference type="InterPro" id="IPR025483">
    <property type="entry name" value="Lipase_euk"/>
</dbReference>
<dbReference type="PANTHER" id="PTHR11005">
    <property type="entry name" value="LYSOSOMAL ACID LIPASE-RELATED"/>
    <property type="match status" value="1"/>
</dbReference>
<dbReference type="Pfam" id="PF00561">
    <property type="entry name" value="Abhydrolase_1"/>
    <property type="match status" value="1"/>
</dbReference>
<dbReference type="PIRSF" id="PIRSF000862">
    <property type="entry name" value="Steryl_ester_lip"/>
    <property type="match status" value="1"/>
</dbReference>
<dbReference type="SUPFAM" id="SSF53474">
    <property type="entry name" value="alpha/beta-Hydrolases"/>
    <property type="match status" value="1"/>
</dbReference>
<dbReference type="PROSITE" id="PS00120">
    <property type="entry name" value="LIPASE_SER"/>
    <property type="match status" value="1"/>
</dbReference>
<sequence>MLETLSRQWIVSHRMEMWLLILVAYMFQRNVNSVHMPTKAVDPEAFMNISEIIQHQGYPCEEYEVATEDGYILSVNRIPRGLVQPKKTGSRPVVLLQHGLVGGASNWISNLPNNSLGFILADAGFDVWMGNSRGNAWSRKHKTLSIDQDEFWAFSYDEMARFDLPAVINFILQKTGQEKIYYVGYSQGTTMGFIAFSTMPELAQKIKMYFALAPIATVKHAKSPGTKFLLLPDMMIKGLFGKKEFLYQTRFLRQLVIYLCGQVILDQICSNIMLLLGGFNTNNMNMSRASVYAAHTLAGTSVQNILHWSQAVNSGELRAFDWGSETKNLEKCNQPTPVRYRVRDMTVPTAMWTGGQDWLSNPEDVKMLLSEVTNLIYHKNIPEWAHVDFIWGLDAPHRMYNEIIHLMQQEETNLSQGRCEAVL</sequence>
<feature type="signal peptide" evidence="2">
    <location>
        <begin position="1"/>
        <end position="33"/>
    </location>
</feature>
<feature type="chain" id="PRO_0000286829" description="Lipase member M">
    <location>
        <begin position="34"/>
        <end position="423"/>
    </location>
</feature>
<feature type="domain" description="AB hydrolase-1" evidence="2">
    <location>
        <begin position="92"/>
        <end position="392"/>
    </location>
</feature>
<feature type="active site" description="Nucleophile" evidence="1">
    <location>
        <position position="186"/>
    </location>
</feature>
<feature type="active site" description="Charge relay system" evidence="3">
    <location>
        <position position="357"/>
    </location>
</feature>
<feature type="active site" description="Charge relay system" evidence="3">
    <location>
        <position position="386"/>
    </location>
</feature>
<feature type="glycosylation site" description="N-linked (GlcNAc...) asparagine" evidence="2">
    <location>
        <position position="48"/>
    </location>
</feature>
<feature type="disulfide bond" evidence="1">
    <location>
        <begin position="260"/>
        <end position="269"/>
    </location>
</feature>
<feature type="splice variant" id="VSP_056261" description="In isoform 2." evidence="5">
    <original>MLETLSRQWIVSHRMEMWLLILVAYMFQRNVNSVHMPTKAVDPEAFMNI</original>
    <variation>MTRPLDRKQ</variation>
    <location>
        <begin position="1"/>
        <end position="49"/>
    </location>
</feature>
<feature type="sequence variant" id="VAR_059382" description="In dbSNP:rs3910680.">
    <original>L</original>
    <variation>S</variation>
    <location>
        <position position="274"/>
    </location>
</feature>
<feature type="sequence variant" id="VAR_032191" description="In dbSNP:rs11202862.">
    <original>R</original>
    <variation>W</variation>
    <location>
        <position position="418"/>
    </location>
</feature>
<accession>Q5VYY2</accession>
<accession>A6PVS3</accession>
<accession>B2RXK7</accession>
<accession>B5MCR3</accession>
<name>LIPM_HUMAN</name>
<keyword id="KW-0025">Alternative splicing</keyword>
<keyword id="KW-1015">Disulfide bond</keyword>
<keyword id="KW-0325">Glycoprotein</keyword>
<keyword id="KW-0378">Hydrolase</keyword>
<keyword id="KW-0442">Lipid degradation</keyword>
<keyword id="KW-0443">Lipid metabolism</keyword>
<keyword id="KW-1185">Reference proteome</keyword>
<keyword id="KW-0964">Secreted</keyword>
<keyword id="KW-0732">Signal</keyword>
<organism>
    <name type="scientific">Homo sapiens</name>
    <name type="common">Human</name>
    <dbReference type="NCBI Taxonomy" id="9606"/>
    <lineage>
        <taxon>Eukaryota</taxon>
        <taxon>Metazoa</taxon>
        <taxon>Chordata</taxon>
        <taxon>Craniata</taxon>
        <taxon>Vertebrata</taxon>
        <taxon>Euteleostomi</taxon>
        <taxon>Mammalia</taxon>
        <taxon>Eutheria</taxon>
        <taxon>Euarchontoglires</taxon>
        <taxon>Primates</taxon>
        <taxon>Haplorrhini</taxon>
        <taxon>Catarrhini</taxon>
        <taxon>Hominidae</taxon>
        <taxon>Homo</taxon>
    </lineage>
</organism>
<evidence type="ECO:0000250" key="1"/>
<evidence type="ECO:0000255" key="2"/>
<evidence type="ECO:0000255" key="3">
    <source>
        <dbReference type="PROSITE-ProRule" id="PRU10037"/>
    </source>
</evidence>
<evidence type="ECO:0000269" key="4">
    <source>
    </source>
</evidence>
<evidence type="ECO:0000303" key="5">
    <source>
    </source>
</evidence>
<evidence type="ECO:0000305" key="6"/>